<feature type="chain" id="PRO_1000095710" description="Tryptophan synthase alpha chain">
    <location>
        <begin position="1"/>
        <end position="269"/>
    </location>
</feature>
<feature type="active site" description="Proton acceptor" evidence="1">
    <location>
        <position position="49"/>
    </location>
</feature>
<feature type="active site" description="Proton acceptor" evidence="1">
    <location>
        <position position="60"/>
    </location>
</feature>
<gene>
    <name evidence="1" type="primary">trpA</name>
    <name type="ordered locus">Daci_5244</name>
</gene>
<proteinExistence type="inferred from homology"/>
<organism>
    <name type="scientific">Delftia acidovorans (strain DSM 14801 / SPH-1)</name>
    <dbReference type="NCBI Taxonomy" id="398578"/>
    <lineage>
        <taxon>Bacteria</taxon>
        <taxon>Pseudomonadati</taxon>
        <taxon>Pseudomonadota</taxon>
        <taxon>Betaproteobacteria</taxon>
        <taxon>Burkholderiales</taxon>
        <taxon>Comamonadaceae</taxon>
        <taxon>Delftia</taxon>
    </lineage>
</organism>
<protein>
    <recommendedName>
        <fullName evidence="1">Tryptophan synthase alpha chain</fullName>
        <ecNumber evidence="1">4.2.1.20</ecNumber>
    </recommendedName>
</protein>
<reference key="1">
    <citation type="submission" date="2007-11" db="EMBL/GenBank/DDBJ databases">
        <title>Complete sequence of Delftia acidovorans DSM 14801 / SPH-1.</title>
        <authorList>
            <person name="Copeland A."/>
            <person name="Lucas S."/>
            <person name="Lapidus A."/>
            <person name="Barry K."/>
            <person name="Glavina del Rio T."/>
            <person name="Dalin E."/>
            <person name="Tice H."/>
            <person name="Pitluck S."/>
            <person name="Lowry S."/>
            <person name="Clum A."/>
            <person name="Schmutz J."/>
            <person name="Larimer F."/>
            <person name="Land M."/>
            <person name="Hauser L."/>
            <person name="Kyrpides N."/>
            <person name="Kim E."/>
            <person name="Schleheck D."/>
            <person name="Richardson P."/>
        </authorList>
    </citation>
    <scope>NUCLEOTIDE SEQUENCE [LARGE SCALE GENOMIC DNA]</scope>
    <source>
        <strain>DSM 14801 / SPH-1</strain>
    </source>
</reference>
<sequence length="269" mass="28958">MSRITTTFAKLQEEGRKALIPYITAGFPFAAITPSLMHGMVEAGADVIELGVPFSDPMADGPTIQKAGDRAIANGVGLVQVLAYVREFRQKNQTTPVVLMGYANPVERYDQIHGKDRFVDDAAEAGVDGLLIVDYPPEECEAFAAQLRARDMDLIFLLAPTSTTERMQQVARVASGYVYYVSLKGVTGSGALDTAAVEAMLPRIREHVSIPVGVGFGIRDAATAQAISRVADAVVIGSRIIEMLDGQPHEKIVPLTIDFLRGVRKALDA</sequence>
<name>TRPA_DELAS</name>
<comment type="function">
    <text evidence="1">The alpha subunit is responsible for the aldol cleavage of indoleglycerol phosphate to indole and glyceraldehyde 3-phosphate.</text>
</comment>
<comment type="catalytic activity">
    <reaction evidence="1">
        <text>(1S,2R)-1-C-(indol-3-yl)glycerol 3-phosphate + L-serine = D-glyceraldehyde 3-phosphate + L-tryptophan + H2O</text>
        <dbReference type="Rhea" id="RHEA:10532"/>
        <dbReference type="ChEBI" id="CHEBI:15377"/>
        <dbReference type="ChEBI" id="CHEBI:33384"/>
        <dbReference type="ChEBI" id="CHEBI:57912"/>
        <dbReference type="ChEBI" id="CHEBI:58866"/>
        <dbReference type="ChEBI" id="CHEBI:59776"/>
        <dbReference type="EC" id="4.2.1.20"/>
    </reaction>
</comment>
<comment type="pathway">
    <text evidence="1">Amino-acid biosynthesis; L-tryptophan biosynthesis; L-tryptophan from chorismate: step 5/5.</text>
</comment>
<comment type="subunit">
    <text evidence="1">Tetramer of two alpha and two beta chains.</text>
</comment>
<comment type="similarity">
    <text evidence="1">Belongs to the TrpA family.</text>
</comment>
<evidence type="ECO:0000255" key="1">
    <source>
        <dbReference type="HAMAP-Rule" id="MF_00131"/>
    </source>
</evidence>
<accession>A9BNH8</accession>
<dbReference type="EC" id="4.2.1.20" evidence="1"/>
<dbReference type="EMBL" id="CP000884">
    <property type="protein sequence ID" value="ABX37873.1"/>
    <property type="molecule type" value="Genomic_DNA"/>
</dbReference>
<dbReference type="RefSeq" id="WP_012207043.1">
    <property type="nucleotide sequence ID" value="NC_010002.1"/>
</dbReference>
<dbReference type="SMR" id="A9BNH8"/>
<dbReference type="STRING" id="398578.Daci_5244"/>
<dbReference type="GeneID" id="24115391"/>
<dbReference type="KEGG" id="dac:Daci_5244"/>
<dbReference type="eggNOG" id="COG0159">
    <property type="taxonomic scope" value="Bacteria"/>
</dbReference>
<dbReference type="HOGENOM" id="CLU_016734_0_0_4"/>
<dbReference type="UniPathway" id="UPA00035">
    <property type="reaction ID" value="UER00044"/>
</dbReference>
<dbReference type="Proteomes" id="UP000000784">
    <property type="component" value="Chromosome"/>
</dbReference>
<dbReference type="GO" id="GO:0005829">
    <property type="term" value="C:cytosol"/>
    <property type="evidence" value="ECO:0007669"/>
    <property type="project" value="TreeGrafter"/>
</dbReference>
<dbReference type="GO" id="GO:0004834">
    <property type="term" value="F:tryptophan synthase activity"/>
    <property type="evidence" value="ECO:0007669"/>
    <property type="project" value="UniProtKB-UniRule"/>
</dbReference>
<dbReference type="CDD" id="cd04724">
    <property type="entry name" value="Tryptophan_synthase_alpha"/>
    <property type="match status" value="1"/>
</dbReference>
<dbReference type="FunFam" id="3.20.20.70:FF:000037">
    <property type="entry name" value="Tryptophan synthase alpha chain"/>
    <property type="match status" value="1"/>
</dbReference>
<dbReference type="Gene3D" id="3.20.20.70">
    <property type="entry name" value="Aldolase class I"/>
    <property type="match status" value="1"/>
</dbReference>
<dbReference type="HAMAP" id="MF_00131">
    <property type="entry name" value="Trp_synth_alpha"/>
    <property type="match status" value="1"/>
</dbReference>
<dbReference type="InterPro" id="IPR013785">
    <property type="entry name" value="Aldolase_TIM"/>
</dbReference>
<dbReference type="InterPro" id="IPR011060">
    <property type="entry name" value="RibuloseP-bd_barrel"/>
</dbReference>
<dbReference type="InterPro" id="IPR018204">
    <property type="entry name" value="Trp_synthase_alpha_AS"/>
</dbReference>
<dbReference type="InterPro" id="IPR002028">
    <property type="entry name" value="Trp_synthase_suA"/>
</dbReference>
<dbReference type="NCBIfam" id="TIGR00262">
    <property type="entry name" value="trpA"/>
    <property type="match status" value="1"/>
</dbReference>
<dbReference type="PANTHER" id="PTHR43406:SF1">
    <property type="entry name" value="TRYPTOPHAN SYNTHASE ALPHA CHAIN, CHLOROPLASTIC"/>
    <property type="match status" value="1"/>
</dbReference>
<dbReference type="PANTHER" id="PTHR43406">
    <property type="entry name" value="TRYPTOPHAN SYNTHASE, ALPHA CHAIN"/>
    <property type="match status" value="1"/>
</dbReference>
<dbReference type="Pfam" id="PF00290">
    <property type="entry name" value="Trp_syntA"/>
    <property type="match status" value="1"/>
</dbReference>
<dbReference type="SUPFAM" id="SSF51366">
    <property type="entry name" value="Ribulose-phoshate binding barrel"/>
    <property type="match status" value="1"/>
</dbReference>
<dbReference type="PROSITE" id="PS00167">
    <property type="entry name" value="TRP_SYNTHASE_ALPHA"/>
    <property type="match status" value="1"/>
</dbReference>
<keyword id="KW-0028">Amino-acid biosynthesis</keyword>
<keyword id="KW-0057">Aromatic amino acid biosynthesis</keyword>
<keyword id="KW-0456">Lyase</keyword>
<keyword id="KW-1185">Reference proteome</keyword>
<keyword id="KW-0822">Tryptophan biosynthesis</keyword>